<accession>A0LR93</accession>
<comment type="function">
    <text evidence="1">Specifically dimethylates two adjacent adenosines (A1518 and A1519) in the loop of a conserved hairpin near the 3'-end of 16S rRNA in the 30S particle. May play a critical role in biogenesis of 30S subunits.</text>
</comment>
<comment type="catalytic activity">
    <reaction evidence="1">
        <text>adenosine(1518)/adenosine(1519) in 16S rRNA + 4 S-adenosyl-L-methionine = N(6)-dimethyladenosine(1518)/N(6)-dimethyladenosine(1519) in 16S rRNA + 4 S-adenosyl-L-homocysteine + 4 H(+)</text>
        <dbReference type="Rhea" id="RHEA:19609"/>
        <dbReference type="Rhea" id="RHEA-COMP:10232"/>
        <dbReference type="Rhea" id="RHEA-COMP:10233"/>
        <dbReference type="ChEBI" id="CHEBI:15378"/>
        <dbReference type="ChEBI" id="CHEBI:57856"/>
        <dbReference type="ChEBI" id="CHEBI:59789"/>
        <dbReference type="ChEBI" id="CHEBI:74411"/>
        <dbReference type="ChEBI" id="CHEBI:74493"/>
        <dbReference type="EC" id="2.1.1.182"/>
    </reaction>
</comment>
<comment type="subcellular location">
    <subcellularLocation>
        <location evidence="1">Cytoplasm</location>
    </subcellularLocation>
</comment>
<comment type="similarity">
    <text evidence="1">Belongs to the class I-like SAM-binding methyltransferase superfamily. rRNA adenine N(6)-methyltransferase family. RsmA subfamily.</text>
</comment>
<proteinExistence type="inferred from homology"/>
<gene>
    <name evidence="1" type="primary">rsmA</name>
    <name evidence="1" type="synonym">ksgA</name>
    <name type="ordered locus">Acel_0178</name>
</gene>
<name>RSMA_ACIC1</name>
<keyword id="KW-0963">Cytoplasm</keyword>
<keyword id="KW-0489">Methyltransferase</keyword>
<keyword id="KW-1185">Reference proteome</keyword>
<keyword id="KW-0694">RNA-binding</keyword>
<keyword id="KW-0698">rRNA processing</keyword>
<keyword id="KW-0949">S-adenosyl-L-methionine</keyword>
<keyword id="KW-0808">Transferase</keyword>
<reference key="1">
    <citation type="journal article" date="2009" name="Genome Res.">
        <title>Complete genome of the cellulolytic thermophile Acidothermus cellulolyticus 11B provides insights into its ecophysiological and evolutionary adaptations.</title>
        <authorList>
            <person name="Barabote R.D."/>
            <person name="Xie G."/>
            <person name="Leu D.H."/>
            <person name="Normand P."/>
            <person name="Necsulea A."/>
            <person name="Daubin V."/>
            <person name="Medigue C."/>
            <person name="Adney W.S."/>
            <person name="Xu X.C."/>
            <person name="Lapidus A."/>
            <person name="Parales R.E."/>
            <person name="Detter C."/>
            <person name="Pujic P."/>
            <person name="Bruce D."/>
            <person name="Lavire C."/>
            <person name="Challacombe J.F."/>
            <person name="Brettin T.S."/>
            <person name="Berry A.M."/>
        </authorList>
    </citation>
    <scope>NUCLEOTIDE SEQUENCE [LARGE SCALE GENOMIC DNA]</scope>
    <source>
        <strain>ATCC 43068 / DSM 8971 / 11B</strain>
    </source>
</reference>
<organism>
    <name type="scientific">Acidothermus cellulolyticus (strain ATCC 43068 / DSM 8971 / 11B)</name>
    <dbReference type="NCBI Taxonomy" id="351607"/>
    <lineage>
        <taxon>Bacteria</taxon>
        <taxon>Bacillati</taxon>
        <taxon>Actinomycetota</taxon>
        <taxon>Actinomycetes</taxon>
        <taxon>Acidothermales</taxon>
        <taxon>Acidothermaceae</taxon>
        <taxon>Acidothermus</taxon>
    </lineage>
</organism>
<protein>
    <recommendedName>
        <fullName evidence="1">Ribosomal RNA small subunit methyltransferase A</fullName>
        <ecNumber evidence="1">2.1.1.182</ecNumber>
    </recommendedName>
    <alternativeName>
        <fullName evidence="1">16S rRNA (adenine(1518)-N(6)/adenine(1519)-N(6))-dimethyltransferase</fullName>
    </alternativeName>
    <alternativeName>
        <fullName evidence="1">16S rRNA dimethyladenosine transferase</fullName>
    </alternativeName>
    <alternativeName>
        <fullName evidence="1">16S rRNA dimethylase</fullName>
    </alternativeName>
    <alternativeName>
        <fullName evidence="1">S-adenosylmethionine-6-N', N'-adenosyl(rRNA) dimethyltransferase</fullName>
    </alternativeName>
</protein>
<dbReference type="EC" id="2.1.1.182" evidence="1"/>
<dbReference type="EMBL" id="CP000481">
    <property type="protein sequence ID" value="ABK51953.1"/>
    <property type="molecule type" value="Genomic_DNA"/>
</dbReference>
<dbReference type="RefSeq" id="WP_011719017.1">
    <property type="nucleotide sequence ID" value="NC_008578.1"/>
</dbReference>
<dbReference type="SMR" id="A0LR93"/>
<dbReference type="FunCoup" id="A0LR93">
    <property type="interactions" value="237"/>
</dbReference>
<dbReference type="STRING" id="351607.Acel_0178"/>
<dbReference type="KEGG" id="ace:Acel_0178"/>
<dbReference type="eggNOG" id="COG0030">
    <property type="taxonomic scope" value="Bacteria"/>
</dbReference>
<dbReference type="HOGENOM" id="CLU_041220_1_1_11"/>
<dbReference type="InParanoid" id="A0LR93"/>
<dbReference type="OrthoDB" id="9814755at2"/>
<dbReference type="Proteomes" id="UP000008221">
    <property type="component" value="Chromosome"/>
</dbReference>
<dbReference type="GO" id="GO:0005829">
    <property type="term" value="C:cytosol"/>
    <property type="evidence" value="ECO:0007669"/>
    <property type="project" value="TreeGrafter"/>
</dbReference>
<dbReference type="GO" id="GO:0052908">
    <property type="term" value="F:16S rRNA (adenine(1518)-N(6)/adenine(1519)-N(6))-dimethyltransferase activity"/>
    <property type="evidence" value="ECO:0007669"/>
    <property type="project" value="UniProtKB-EC"/>
</dbReference>
<dbReference type="GO" id="GO:0003723">
    <property type="term" value="F:RNA binding"/>
    <property type="evidence" value="ECO:0007669"/>
    <property type="project" value="UniProtKB-KW"/>
</dbReference>
<dbReference type="CDD" id="cd02440">
    <property type="entry name" value="AdoMet_MTases"/>
    <property type="match status" value="1"/>
</dbReference>
<dbReference type="FunFam" id="1.10.8.100:FF:000003">
    <property type="entry name" value="Ribosomal RNA small subunit methyltransferase A"/>
    <property type="match status" value="1"/>
</dbReference>
<dbReference type="FunFam" id="3.40.50.150:FF:000023">
    <property type="entry name" value="Ribosomal RNA small subunit methyltransferase A"/>
    <property type="match status" value="1"/>
</dbReference>
<dbReference type="Gene3D" id="1.10.8.100">
    <property type="entry name" value="Ribosomal RNA adenine dimethylase-like, domain 2"/>
    <property type="match status" value="1"/>
</dbReference>
<dbReference type="Gene3D" id="3.40.50.150">
    <property type="entry name" value="Vaccinia Virus protein VP39"/>
    <property type="match status" value="1"/>
</dbReference>
<dbReference type="HAMAP" id="MF_00607">
    <property type="entry name" value="16SrRNA_methyltr_A"/>
    <property type="match status" value="1"/>
</dbReference>
<dbReference type="InterPro" id="IPR001737">
    <property type="entry name" value="KsgA/Erm"/>
</dbReference>
<dbReference type="InterPro" id="IPR023165">
    <property type="entry name" value="rRNA_Ade_diMease-like_C"/>
</dbReference>
<dbReference type="InterPro" id="IPR020596">
    <property type="entry name" value="rRNA_Ade_Mease_Trfase_CS"/>
</dbReference>
<dbReference type="InterPro" id="IPR020598">
    <property type="entry name" value="rRNA_Ade_methylase_Trfase_N"/>
</dbReference>
<dbReference type="InterPro" id="IPR011530">
    <property type="entry name" value="rRNA_adenine_dimethylase"/>
</dbReference>
<dbReference type="InterPro" id="IPR029063">
    <property type="entry name" value="SAM-dependent_MTases_sf"/>
</dbReference>
<dbReference type="NCBIfam" id="TIGR00755">
    <property type="entry name" value="ksgA"/>
    <property type="match status" value="1"/>
</dbReference>
<dbReference type="PANTHER" id="PTHR11727">
    <property type="entry name" value="DIMETHYLADENOSINE TRANSFERASE"/>
    <property type="match status" value="1"/>
</dbReference>
<dbReference type="PANTHER" id="PTHR11727:SF7">
    <property type="entry name" value="DIMETHYLADENOSINE TRANSFERASE-RELATED"/>
    <property type="match status" value="1"/>
</dbReference>
<dbReference type="Pfam" id="PF00398">
    <property type="entry name" value="RrnaAD"/>
    <property type="match status" value="1"/>
</dbReference>
<dbReference type="SMART" id="SM00650">
    <property type="entry name" value="rADc"/>
    <property type="match status" value="1"/>
</dbReference>
<dbReference type="SUPFAM" id="SSF53335">
    <property type="entry name" value="S-adenosyl-L-methionine-dependent methyltransferases"/>
    <property type="match status" value="1"/>
</dbReference>
<dbReference type="PROSITE" id="PS01131">
    <property type="entry name" value="RRNA_A_DIMETH"/>
    <property type="match status" value="1"/>
</dbReference>
<dbReference type="PROSITE" id="PS51689">
    <property type="entry name" value="SAM_RNA_A_N6_MT"/>
    <property type="match status" value="1"/>
</dbReference>
<evidence type="ECO:0000255" key="1">
    <source>
        <dbReference type="HAMAP-Rule" id="MF_00607"/>
    </source>
</evidence>
<feature type="chain" id="PRO_1000056590" description="Ribosomal RNA small subunit methyltransferase A">
    <location>
        <begin position="1"/>
        <end position="290"/>
    </location>
</feature>
<feature type="binding site" evidence="1">
    <location>
        <position position="37"/>
    </location>
    <ligand>
        <name>S-adenosyl-L-methionine</name>
        <dbReference type="ChEBI" id="CHEBI:59789"/>
    </ligand>
</feature>
<feature type="binding site" evidence="1">
    <location>
        <position position="39"/>
    </location>
    <ligand>
        <name>S-adenosyl-L-methionine</name>
        <dbReference type="ChEBI" id="CHEBI:59789"/>
    </ligand>
</feature>
<feature type="binding site" evidence="1">
    <location>
        <position position="64"/>
    </location>
    <ligand>
        <name>S-adenosyl-L-methionine</name>
        <dbReference type="ChEBI" id="CHEBI:59789"/>
    </ligand>
</feature>
<feature type="binding site" evidence="1">
    <location>
        <position position="85"/>
    </location>
    <ligand>
        <name>S-adenosyl-L-methionine</name>
        <dbReference type="ChEBI" id="CHEBI:59789"/>
    </ligand>
</feature>
<feature type="binding site" evidence="1">
    <location>
        <position position="115"/>
    </location>
    <ligand>
        <name>S-adenosyl-L-methionine</name>
        <dbReference type="ChEBI" id="CHEBI:59789"/>
    </ligand>
</feature>
<feature type="binding site" evidence="1">
    <location>
        <position position="132"/>
    </location>
    <ligand>
        <name>S-adenosyl-L-methionine</name>
        <dbReference type="ChEBI" id="CHEBI:59789"/>
    </ligand>
</feature>
<sequence>MSDAGHVDAVCKPLGAADIRELARSAGVRPRKTFGQHFVVDPGVLRKIARYAELSSEDIALEIGPGFGSLTLVLLPLVRRLLAVEIDRVLAAVLPETIRRRCPAFADRLVVVHGDVLRLTTLPDDPTVLVANLPYNVAVPAVLRVFERFSTVTRTVIMVQREVAERLCADPGSPAYGAPSIKLRWYGRARIVGSVSADVFWPRPQVESAVVRIDRQPPPVPGVDRAAVFAVIDAAFAQRRKMLRRALSGWAGSAQAAEERILAAGLRPTDRGEALTLADFIRLAQAPPTR</sequence>